<name>AROA_DESRM</name>
<comment type="function">
    <text evidence="1">Catalyzes the transfer of the enolpyruvyl moiety of phosphoenolpyruvate (PEP) to the 5-hydroxyl of shikimate-3-phosphate (S3P) to produce enolpyruvyl shikimate-3-phosphate and inorganic phosphate.</text>
</comment>
<comment type="catalytic activity">
    <reaction evidence="1">
        <text>3-phosphoshikimate + phosphoenolpyruvate = 5-O-(1-carboxyvinyl)-3-phosphoshikimate + phosphate</text>
        <dbReference type="Rhea" id="RHEA:21256"/>
        <dbReference type="ChEBI" id="CHEBI:43474"/>
        <dbReference type="ChEBI" id="CHEBI:57701"/>
        <dbReference type="ChEBI" id="CHEBI:58702"/>
        <dbReference type="ChEBI" id="CHEBI:145989"/>
        <dbReference type="EC" id="2.5.1.19"/>
    </reaction>
    <physiologicalReaction direction="left-to-right" evidence="1">
        <dbReference type="Rhea" id="RHEA:21257"/>
    </physiologicalReaction>
</comment>
<comment type="pathway">
    <text evidence="1">Metabolic intermediate biosynthesis; chorismate biosynthesis; chorismate from D-erythrose 4-phosphate and phosphoenolpyruvate: step 6/7.</text>
</comment>
<comment type="subunit">
    <text evidence="1">Monomer.</text>
</comment>
<comment type="subcellular location">
    <subcellularLocation>
        <location evidence="1">Cytoplasm</location>
    </subcellularLocation>
</comment>
<comment type="similarity">
    <text evidence="1">Belongs to the EPSP synthase family.</text>
</comment>
<sequence>MELVINPVKKLRGNVSVPGDKSISHRAVMVGALAQGITEVSNFLMGEDCLATVKCLRAMGVSIEGPTNGKLKIYGVGLQGLREPADLLDTGNSGTTTRLLMGILAGQPFTSIITGDQSLKKRPMARVTKPLQDMGASFLGRNQNNLLPMAVQGGKLKPIDFHSPVASAQVKSAVLFAGLFAEGYTSVTEPAVSRDHSERMLKAFGAEVEVKNQTVRIKGLPQLKGMKITVPGDISSAAFLMVAAAILPGSDITIQGVGINPTRDGILEVLKQMGAGIEIMHSRLQGGEPVGDIRIKGAELQGTELSGPIIPRLIDEIPIIAVAAAYARGTTVIRDASELKVKESNRISSVVRELRKFGATVEELSDGLIIQGGTPLSGAVCQSYGDHRMAMAMAVAGLAASGQTLIEQADCIPVSFPGFSDVLKEVIVE</sequence>
<gene>
    <name evidence="1" type="primary">aroA</name>
    <name type="ordered locus">Dred_1151</name>
</gene>
<dbReference type="EC" id="2.5.1.19" evidence="1"/>
<dbReference type="EMBL" id="CP000612">
    <property type="protein sequence ID" value="ABO49685.1"/>
    <property type="molecule type" value="Genomic_DNA"/>
</dbReference>
<dbReference type="RefSeq" id="WP_011877511.1">
    <property type="nucleotide sequence ID" value="NC_009253.1"/>
</dbReference>
<dbReference type="SMR" id="A4J3N2"/>
<dbReference type="STRING" id="349161.Dred_1151"/>
<dbReference type="KEGG" id="drm:Dred_1151"/>
<dbReference type="eggNOG" id="COG0128">
    <property type="taxonomic scope" value="Bacteria"/>
</dbReference>
<dbReference type="HOGENOM" id="CLU_024321_0_1_9"/>
<dbReference type="UniPathway" id="UPA00053">
    <property type="reaction ID" value="UER00089"/>
</dbReference>
<dbReference type="Proteomes" id="UP000001556">
    <property type="component" value="Chromosome"/>
</dbReference>
<dbReference type="GO" id="GO:0005737">
    <property type="term" value="C:cytoplasm"/>
    <property type="evidence" value="ECO:0007669"/>
    <property type="project" value="UniProtKB-SubCell"/>
</dbReference>
<dbReference type="GO" id="GO:0003866">
    <property type="term" value="F:3-phosphoshikimate 1-carboxyvinyltransferase activity"/>
    <property type="evidence" value="ECO:0007669"/>
    <property type="project" value="UniProtKB-UniRule"/>
</dbReference>
<dbReference type="GO" id="GO:0008652">
    <property type="term" value="P:amino acid biosynthetic process"/>
    <property type="evidence" value="ECO:0007669"/>
    <property type="project" value="UniProtKB-KW"/>
</dbReference>
<dbReference type="GO" id="GO:0009073">
    <property type="term" value="P:aromatic amino acid family biosynthetic process"/>
    <property type="evidence" value="ECO:0007669"/>
    <property type="project" value="UniProtKB-KW"/>
</dbReference>
<dbReference type="GO" id="GO:0009423">
    <property type="term" value="P:chorismate biosynthetic process"/>
    <property type="evidence" value="ECO:0007669"/>
    <property type="project" value="UniProtKB-UniRule"/>
</dbReference>
<dbReference type="CDD" id="cd01556">
    <property type="entry name" value="EPSP_synthase"/>
    <property type="match status" value="1"/>
</dbReference>
<dbReference type="FunFam" id="3.65.10.10:FF:000005">
    <property type="entry name" value="3-phosphoshikimate 1-carboxyvinyltransferase"/>
    <property type="match status" value="1"/>
</dbReference>
<dbReference type="FunFam" id="3.65.10.10:FF:000006">
    <property type="entry name" value="3-phosphoshikimate 1-carboxyvinyltransferase"/>
    <property type="match status" value="1"/>
</dbReference>
<dbReference type="Gene3D" id="3.65.10.10">
    <property type="entry name" value="Enolpyruvate transferase domain"/>
    <property type="match status" value="2"/>
</dbReference>
<dbReference type="HAMAP" id="MF_00210">
    <property type="entry name" value="EPSP_synth"/>
    <property type="match status" value="1"/>
</dbReference>
<dbReference type="InterPro" id="IPR001986">
    <property type="entry name" value="Enolpyruvate_Tfrase_dom"/>
</dbReference>
<dbReference type="InterPro" id="IPR036968">
    <property type="entry name" value="Enolpyruvate_Tfrase_sf"/>
</dbReference>
<dbReference type="InterPro" id="IPR006264">
    <property type="entry name" value="EPSP_synthase"/>
</dbReference>
<dbReference type="InterPro" id="IPR023193">
    <property type="entry name" value="EPSP_synthase_CS"/>
</dbReference>
<dbReference type="InterPro" id="IPR013792">
    <property type="entry name" value="RNA3'P_cycl/enolpyr_Trfase_a/b"/>
</dbReference>
<dbReference type="NCBIfam" id="TIGR01356">
    <property type="entry name" value="aroA"/>
    <property type="match status" value="1"/>
</dbReference>
<dbReference type="PANTHER" id="PTHR21090">
    <property type="entry name" value="AROM/DEHYDROQUINATE SYNTHASE"/>
    <property type="match status" value="1"/>
</dbReference>
<dbReference type="PANTHER" id="PTHR21090:SF5">
    <property type="entry name" value="PENTAFUNCTIONAL AROM POLYPEPTIDE"/>
    <property type="match status" value="1"/>
</dbReference>
<dbReference type="Pfam" id="PF00275">
    <property type="entry name" value="EPSP_synthase"/>
    <property type="match status" value="1"/>
</dbReference>
<dbReference type="PIRSF" id="PIRSF000505">
    <property type="entry name" value="EPSPS"/>
    <property type="match status" value="1"/>
</dbReference>
<dbReference type="SUPFAM" id="SSF55205">
    <property type="entry name" value="EPT/RTPC-like"/>
    <property type="match status" value="1"/>
</dbReference>
<dbReference type="PROSITE" id="PS00104">
    <property type="entry name" value="EPSP_SYNTHASE_1"/>
    <property type="match status" value="1"/>
</dbReference>
<dbReference type="PROSITE" id="PS00885">
    <property type="entry name" value="EPSP_SYNTHASE_2"/>
    <property type="match status" value="1"/>
</dbReference>
<reference key="1">
    <citation type="submission" date="2007-03" db="EMBL/GenBank/DDBJ databases">
        <title>Complete sequence of Desulfotomaculum reducens MI-1.</title>
        <authorList>
            <consortium name="US DOE Joint Genome Institute"/>
            <person name="Copeland A."/>
            <person name="Lucas S."/>
            <person name="Lapidus A."/>
            <person name="Barry K."/>
            <person name="Detter J.C."/>
            <person name="Glavina del Rio T."/>
            <person name="Hammon N."/>
            <person name="Israni S."/>
            <person name="Dalin E."/>
            <person name="Tice H."/>
            <person name="Pitluck S."/>
            <person name="Sims D."/>
            <person name="Brettin T."/>
            <person name="Bruce D."/>
            <person name="Han C."/>
            <person name="Tapia R."/>
            <person name="Schmutz J."/>
            <person name="Larimer F."/>
            <person name="Land M."/>
            <person name="Hauser L."/>
            <person name="Kyrpides N."/>
            <person name="Kim E."/>
            <person name="Tebo B.M."/>
            <person name="Richardson P."/>
        </authorList>
    </citation>
    <scope>NUCLEOTIDE SEQUENCE [LARGE SCALE GENOMIC DNA]</scope>
    <source>
        <strain>ATCC BAA-1160 / DSM 100696 / MI-1</strain>
    </source>
</reference>
<organism>
    <name type="scientific">Desulforamulus reducens (strain ATCC BAA-1160 / DSM 100696 / MI-1)</name>
    <name type="common">Desulfotomaculum reducens</name>
    <dbReference type="NCBI Taxonomy" id="349161"/>
    <lineage>
        <taxon>Bacteria</taxon>
        <taxon>Bacillati</taxon>
        <taxon>Bacillota</taxon>
        <taxon>Clostridia</taxon>
        <taxon>Eubacteriales</taxon>
        <taxon>Peptococcaceae</taxon>
        <taxon>Desulforamulus</taxon>
    </lineage>
</organism>
<protein>
    <recommendedName>
        <fullName evidence="1">3-phosphoshikimate 1-carboxyvinyltransferase</fullName>
        <ecNumber evidence="1">2.5.1.19</ecNumber>
    </recommendedName>
    <alternativeName>
        <fullName evidence="1">5-enolpyruvylshikimate-3-phosphate synthase</fullName>
        <shortName evidence="1">EPSP synthase</shortName>
        <shortName evidence="1">EPSPS</shortName>
    </alternativeName>
</protein>
<keyword id="KW-0028">Amino-acid biosynthesis</keyword>
<keyword id="KW-0057">Aromatic amino acid biosynthesis</keyword>
<keyword id="KW-0963">Cytoplasm</keyword>
<keyword id="KW-1185">Reference proteome</keyword>
<keyword id="KW-0808">Transferase</keyword>
<accession>A4J3N2</accession>
<feature type="chain" id="PRO_0000325343" description="3-phosphoshikimate 1-carboxyvinyltransferase">
    <location>
        <begin position="1"/>
        <end position="429"/>
    </location>
</feature>
<feature type="active site" description="Proton acceptor" evidence="1">
    <location>
        <position position="315"/>
    </location>
</feature>
<feature type="binding site" evidence="1">
    <location>
        <position position="21"/>
    </location>
    <ligand>
        <name>3-phosphoshikimate</name>
        <dbReference type="ChEBI" id="CHEBI:145989"/>
    </ligand>
</feature>
<feature type="binding site" evidence="1">
    <location>
        <position position="21"/>
    </location>
    <ligand>
        <name>phosphoenolpyruvate</name>
        <dbReference type="ChEBI" id="CHEBI:58702"/>
    </ligand>
</feature>
<feature type="binding site" evidence="1">
    <location>
        <position position="22"/>
    </location>
    <ligand>
        <name>3-phosphoshikimate</name>
        <dbReference type="ChEBI" id="CHEBI:145989"/>
    </ligand>
</feature>
<feature type="binding site" evidence="1">
    <location>
        <position position="26"/>
    </location>
    <ligand>
        <name>3-phosphoshikimate</name>
        <dbReference type="ChEBI" id="CHEBI:145989"/>
    </ligand>
</feature>
<feature type="binding site" evidence="1">
    <location>
        <position position="94"/>
    </location>
    <ligand>
        <name>phosphoenolpyruvate</name>
        <dbReference type="ChEBI" id="CHEBI:58702"/>
    </ligand>
</feature>
<feature type="binding site" evidence="1">
    <location>
        <position position="122"/>
    </location>
    <ligand>
        <name>phosphoenolpyruvate</name>
        <dbReference type="ChEBI" id="CHEBI:58702"/>
    </ligand>
</feature>
<feature type="binding site" evidence="1">
    <location>
        <position position="167"/>
    </location>
    <ligand>
        <name>3-phosphoshikimate</name>
        <dbReference type="ChEBI" id="CHEBI:145989"/>
    </ligand>
</feature>
<feature type="binding site" evidence="1">
    <location>
        <position position="169"/>
    </location>
    <ligand>
        <name>3-phosphoshikimate</name>
        <dbReference type="ChEBI" id="CHEBI:145989"/>
    </ligand>
</feature>
<feature type="binding site" evidence="1">
    <location>
        <position position="169"/>
    </location>
    <ligand>
        <name>phosphoenolpyruvate</name>
        <dbReference type="ChEBI" id="CHEBI:58702"/>
    </ligand>
</feature>
<feature type="binding site" evidence="1">
    <location>
        <position position="315"/>
    </location>
    <ligand>
        <name>3-phosphoshikimate</name>
        <dbReference type="ChEBI" id="CHEBI:145989"/>
    </ligand>
</feature>
<feature type="binding site" evidence="1">
    <location>
        <position position="342"/>
    </location>
    <ligand>
        <name>3-phosphoshikimate</name>
        <dbReference type="ChEBI" id="CHEBI:145989"/>
    </ligand>
</feature>
<feature type="binding site" evidence="1">
    <location>
        <position position="346"/>
    </location>
    <ligand>
        <name>phosphoenolpyruvate</name>
        <dbReference type="ChEBI" id="CHEBI:58702"/>
    </ligand>
</feature>
<feature type="binding site" evidence="1">
    <location>
        <position position="388"/>
    </location>
    <ligand>
        <name>phosphoenolpyruvate</name>
        <dbReference type="ChEBI" id="CHEBI:58702"/>
    </ligand>
</feature>
<proteinExistence type="inferred from homology"/>
<evidence type="ECO:0000255" key="1">
    <source>
        <dbReference type="HAMAP-Rule" id="MF_00210"/>
    </source>
</evidence>